<accession>D4DDJ7</accession>
<reference key="1">
    <citation type="journal article" date="2011" name="Genome Biol.">
        <title>Comparative and functional genomics provide insights into the pathogenicity of dermatophytic fungi.</title>
        <authorList>
            <person name="Burmester A."/>
            <person name="Shelest E."/>
            <person name="Gloeckner G."/>
            <person name="Heddergott C."/>
            <person name="Schindler S."/>
            <person name="Staib P."/>
            <person name="Heidel A."/>
            <person name="Felder M."/>
            <person name="Petzold A."/>
            <person name="Szafranski K."/>
            <person name="Feuermann M."/>
            <person name="Pedruzzi I."/>
            <person name="Priebe S."/>
            <person name="Groth M."/>
            <person name="Winkler R."/>
            <person name="Li W."/>
            <person name="Kniemeyer O."/>
            <person name="Schroeckh V."/>
            <person name="Hertweck C."/>
            <person name="Hube B."/>
            <person name="White T.C."/>
            <person name="Platzer M."/>
            <person name="Guthke R."/>
            <person name="Heitman J."/>
            <person name="Woestemeyer J."/>
            <person name="Zipfel P.F."/>
            <person name="Monod M."/>
            <person name="Brakhage A.A."/>
        </authorList>
    </citation>
    <scope>NUCLEOTIDE SEQUENCE [LARGE SCALE GENOMIC DNA]</scope>
    <source>
        <strain>HKI 0517</strain>
    </source>
</reference>
<dbReference type="EMBL" id="ACYE01000266">
    <property type="protein sequence ID" value="EFE40064.1"/>
    <property type="molecule type" value="Genomic_DNA"/>
</dbReference>
<dbReference type="RefSeq" id="XP_003020682.1">
    <property type="nucleotide sequence ID" value="XM_003020636.1"/>
</dbReference>
<dbReference type="SMR" id="D4DDJ7"/>
<dbReference type="GeneID" id="9577381"/>
<dbReference type="KEGG" id="tve:TRV_05208"/>
<dbReference type="HOGENOM" id="CLU_011918_1_0_1"/>
<dbReference type="OrthoDB" id="3458at34384"/>
<dbReference type="Proteomes" id="UP000008383">
    <property type="component" value="Unassembled WGS sequence"/>
</dbReference>
<dbReference type="GO" id="GO:0005737">
    <property type="term" value="C:cytoplasm"/>
    <property type="evidence" value="ECO:0007669"/>
    <property type="project" value="UniProtKB-SubCell"/>
</dbReference>
<dbReference type="InterPro" id="IPR006571">
    <property type="entry name" value="TLDc_dom"/>
</dbReference>
<dbReference type="Pfam" id="PF07534">
    <property type="entry name" value="TLD"/>
    <property type="match status" value="1"/>
</dbReference>
<dbReference type="SMART" id="SM00584">
    <property type="entry name" value="TLDc"/>
    <property type="match status" value="1"/>
</dbReference>
<dbReference type="PROSITE" id="PS51886">
    <property type="entry name" value="TLDC"/>
    <property type="match status" value="1"/>
</dbReference>
<comment type="function">
    <text evidence="1">May be involved in a process influencing telomere capping.</text>
</comment>
<comment type="subcellular location">
    <subcellularLocation>
        <location evidence="1">Cytoplasm</location>
    </subcellularLocation>
</comment>
<comment type="similarity">
    <text evidence="4">Belongs to the RTC5 family.</text>
</comment>
<feature type="chain" id="PRO_0000408847" description="Restriction of telomere capping protein 5">
    <location>
        <begin position="1"/>
        <end position="660"/>
    </location>
</feature>
<feature type="domain" description="TLDc" evidence="2">
    <location>
        <begin position="355"/>
        <end position="583"/>
    </location>
</feature>
<feature type="region of interest" description="Disordered" evidence="3">
    <location>
        <begin position="150"/>
        <end position="187"/>
    </location>
</feature>
<feature type="compositionally biased region" description="Basic and acidic residues" evidence="3">
    <location>
        <begin position="157"/>
        <end position="172"/>
    </location>
</feature>
<organism>
    <name type="scientific">Trichophyton verrucosum (strain HKI 0517)</name>
    <dbReference type="NCBI Taxonomy" id="663202"/>
    <lineage>
        <taxon>Eukaryota</taxon>
        <taxon>Fungi</taxon>
        <taxon>Dikarya</taxon>
        <taxon>Ascomycota</taxon>
        <taxon>Pezizomycotina</taxon>
        <taxon>Eurotiomycetes</taxon>
        <taxon>Eurotiomycetidae</taxon>
        <taxon>Onygenales</taxon>
        <taxon>Arthrodermataceae</taxon>
        <taxon>Trichophyton</taxon>
    </lineage>
</organism>
<gene>
    <name type="primary">RTC5</name>
    <name type="ORF">TRV_05208</name>
</gene>
<keyword id="KW-0963">Cytoplasm</keyword>
<proteinExistence type="inferred from homology"/>
<evidence type="ECO:0000250" key="1"/>
<evidence type="ECO:0000255" key="2">
    <source>
        <dbReference type="PROSITE-ProRule" id="PRU01234"/>
    </source>
</evidence>
<evidence type="ECO:0000256" key="3">
    <source>
        <dbReference type="SAM" id="MobiDB-lite"/>
    </source>
</evidence>
<evidence type="ECO:0000305" key="4"/>
<name>RTC5_TRIVH</name>
<sequence>MGAGQSTNTSGHGASPEEMSRILAHRFASKCFTPLELTHLKDNLYSLALKQGDIHYWNEEVLSRFLGIPDGDEKFGLGTLDAGPVIFRMVSYLGAFPFQNTLAPSVLTFDAMVKVIVLLTDRYGKVLRRGKKDRIKLLFGSLADIGRKEASPITSGDKSDNDQGRPETRSDEAGFSVDKPSNDADDYNDDDDLVLAALESLDAIEVFKHDQRIDRTVYEAHISFDTFQRLLMLFVVIAPLQSCEKTSEYFSQLNEESLKPARYCVENILTSFDIGDRTKGIDYETFYWVISTSLPYMFDPLTPLFEHLLFSKNLDLSRRKDSGTCSVSEEKQTKTESYFSPSHPPVILPGSFKPCILDSAVISHLSFFLSTSSPTPNLLQNGTRLHGVFSSDTHGESLTSFSHHVLTWDAPSILLVTGSNSHSSGDEADIITVGAYIPQPWKLPASTSTSHYDTSHQSQLPCLFQLSPRHAVMQGSPSINSLKSNLPVVSFSTKSGIAIGCKIPPPTRTSMDTSRPTPAGSGSLWINPALENAEFFMSNGLSHEEGVFLPPGIARWSPSHPPSKAESETIKISIYNIEVWGVVQTAPTPAQSPYHSRTSTANGDIPDAVARQQANWNFEAREAERRREIHLNVGGGDSEEQSGRALLEMAGIIGDSARRR</sequence>
<protein>
    <recommendedName>
        <fullName>Restriction of telomere capping protein 5</fullName>
    </recommendedName>
</protein>